<reference key="1">
    <citation type="journal article" date="2005" name="Nucleic Acids Res.">
        <title>The genome sequence of Salmonella enterica serovar Choleraesuis, a highly invasive and resistant zoonotic pathogen.</title>
        <authorList>
            <person name="Chiu C.-H."/>
            <person name="Tang P."/>
            <person name="Chu C."/>
            <person name="Hu S."/>
            <person name="Bao Q."/>
            <person name="Yu J."/>
            <person name="Chou Y.-Y."/>
            <person name="Wang H.-S."/>
            <person name="Lee Y.-S."/>
        </authorList>
    </citation>
    <scope>NUCLEOTIDE SEQUENCE [LARGE SCALE GENOMIC DNA]</scope>
    <source>
        <strain>SC-B67</strain>
    </source>
</reference>
<name>METN2_SALCH</name>
<comment type="function">
    <text evidence="1">Part of the ABC transporter complex MetNIQ involved in methionine import. Responsible for energy coupling to the transport system.</text>
</comment>
<comment type="catalytic activity">
    <reaction evidence="1">
        <text>L-methionine(out) + ATP + H2O = L-methionine(in) + ADP + phosphate + H(+)</text>
        <dbReference type="Rhea" id="RHEA:29779"/>
        <dbReference type="ChEBI" id="CHEBI:15377"/>
        <dbReference type="ChEBI" id="CHEBI:15378"/>
        <dbReference type="ChEBI" id="CHEBI:30616"/>
        <dbReference type="ChEBI" id="CHEBI:43474"/>
        <dbReference type="ChEBI" id="CHEBI:57844"/>
        <dbReference type="ChEBI" id="CHEBI:456216"/>
        <dbReference type="EC" id="7.4.2.11"/>
    </reaction>
</comment>
<comment type="catalytic activity">
    <reaction evidence="1">
        <text>D-methionine(out) + ATP + H2O = D-methionine(in) + ADP + phosphate + H(+)</text>
        <dbReference type="Rhea" id="RHEA:29767"/>
        <dbReference type="ChEBI" id="CHEBI:15377"/>
        <dbReference type="ChEBI" id="CHEBI:15378"/>
        <dbReference type="ChEBI" id="CHEBI:30616"/>
        <dbReference type="ChEBI" id="CHEBI:43474"/>
        <dbReference type="ChEBI" id="CHEBI:57932"/>
        <dbReference type="ChEBI" id="CHEBI:456216"/>
        <dbReference type="EC" id="7.4.2.11"/>
    </reaction>
</comment>
<comment type="subunit">
    <text evidence="1">The complex is composed of two ATP-binding proteins (MetN), two transmembrane proteins (MetI) and a solute-binding protein (MetQ).</text>
</comment>
<comment type="subcellular location">
    <subcellularLocation>
        <location evidence="1">Cell inner membrane</location>
        <topology evidence="1">Peripheral membrane protein</topology>
    </subcellularLocation>
</comment>
<comment type="similarity">
    <text evidence="1">Belongs to the ABC transporter superfamily. Methionine importer (TC 3.A.1.24) family.</text>
</comment>
<feature type="chain" id="PRO_0000270376" description="Methionine import ATP-binding protein MetN 2">
    <location>
        <begin position="1"/>
        <end position="338"/>
    </location>
</feature>
<feature type="domain" description="ABC transporter" evidence="1">
    <location>
        <begin position="2"/>
        <end position="242"/>
    </location>
</feature>
<feature type="binding site" evidence="1">
    <location>
        <begin position="39"/>
        <end position="46"/>
    </location>
    <ligand>
        <name>ATP</name>
        <dbReference type="ChEBI" id="CHEBI:30616"/>
    </ligand>
</feature>
<evidence type="ECO:0000255" key="1">
    <source>
        <dbReference type="HAMAP-Rule" id="MF_01719"/>
    </source>
</evidence>
<sequence length="338" mass="36403">MIEIEKVCVDFTAGRGTSTRAVDDVSLHIAAGEIFGIVGTSGAGKSTLLRTLNALTRPSQGRVNVNGVEISALDGKALRQARQRIGIIFQHFNLMHTRTVAQNVAFSLKAAGWERSKIAPRVAEILTLVGLADKANRFPVQLSGGQKQRVGIARAIANHPDVLLCDEPTSALDLETSATILALLRQINAQLGITIVLITHEMNVIKSICDRVAVMSGGKVVESGEVFDVFAHPQHAFTQQLVSHTLNLTLPERLREHLPGQLLKILFIGDSAEQPVLSEVAIKFGVAVNILHGKIEYIGERALGILVVQLTAPHNPTAVAAAVEHIRQRTAQVEVIRG</sequence>
<protein>
    <recommendedName>
        <fullName evidence="1">Methionine import ATP-binding protein MetN 2</fullName>
        <ecNumber evidence="1">7.4.2.11</ecNumber>
    </recommendedName>
</protein>
<organism>
    <name type="scientific">Salmonella choleraesuis (strain SC-B67)</name>
    <dbReference type="NCBI Taxonomy" id="321314"/>
    <lineage>
        <taxon>Bacteria</taxon>
        <taxon>Pseudomonadati</taxon>
        <taxon>Pseudomonadota</taxon>
        <taxon>Gammaproteobacteria</taxon>
        <taxon>Enterobacterales</taxon>
        <taxon>Enterobacteriaceae</taxon>
        <taxon>Salmonella</taxon>
    </lineage>
</organism>
<gene>
    <name evidence="1" type="primary">metN2</name>
    <name type="ordered locus">SCH_0552</name>
</gene>
<proteinExistence type="inferred from homology"/>
<dbReference type="EC" id="7.4.2.11" evidence="1"/>
<dbReference type="EMBL" id="AE017220">
    <property type="protein sequence ID" value="AAX64458.1"/>
    <property type="molecule type" value="Genomic_DNA"/>
</dbReference>
<dbReference type="SMR" id="Q57S53"/>
<dbReference type="KEGG" id="sec:SCH_0552"/>
<dbReference type="HOGENOM" id="CLU_000604_1_3_6"/>
<dbReference type="Proteomes" id="UP000000538">
    <property type="component" value="Chromosome"/>
</dbReference>
<dbReference type="GO" id="GO:0005886">
    <property type="term" value="C:plasma membrane"/>
    <property type="evidence" value="ECO:0007669"/>
    <property type="project" value="UniProtKB-SubCell"/>
</dbReference>
<dbReference type="GO" id="GO:0033232">
    <property type="term" value="F:ABC-type D-methionine transporter activity"/>
    <property type="evidence" value="ECO:0007669"/>
    <property type="project" value="UniProtKB-EC"/>
</dbReference>
<dbReference type="GO" id="GO:0005524">
    <property type="term" value="F:ATP binding"/>
    <property type="evidence" value="ECO:0007669"/>
    <property type="project" value="UniProtKB-KW"/>
</dbReference>
<dbReference type="GO" id="GO:0016887">
    <property type="term" value="F:ATP hydrolysis activity"/>
    <property type="evidence" value="ECO:0007669"/>
    <property type="project" value="InterPro"/>
</dbReference>
<dbReference type="CDD" id="cd03258">
    <property type="entry name" value="ABC_MetN_methionine_transporter"/>
    <property type="match status" value="1"/>
</dbReference>
<dbReference type="FunFam" id="3.40.50.300:FF:000056">
    <property type="entry name" value="Cell division ATP-binding protein FtsE"/>
    <property type="match status" value="1"/>
</dbReference>
<dbReference type="Gene3D" id="3.30.70.260">
    <property type="match status" value="1"/>
</dbReference>
<dbReference type="Gene3D" id="3.40.50.300">
    <property type="entry name" value="P-loop containing nucleotide triphosphate hydrolases"/>
    <property type="match status" value="1"/>
</dbReference>
<dbReference type="InterPro" id="IPR003593">
    <property type="entry name" value="AAA+_ATPase"/>
</dbReference>
<dbReference type="InterPro" id="IPR003439">
    <property type="entry name" value="ABC_transporter-like_ATP-bd"/>
</dbReference>
<dbReference type="InterPro" id="IPR017871">
    <property type="entry name" value="ABC_transporter-like_CS"/>
</dbReference>
<dbReference type="InterPro" id="IPR045865">
    <property type="entry name" value="ACT-like_dom_sf"/>
</dbReference>
<dbReference type="InterPro" id="IPR041701">
    <property type="entry name" value="MetN_ABC"/>
</dbReference>
<dbReference type="InterPro" id="IPR050086">
    <property type="entry name" value="MetN_ABC_transporter-like"/>
</dbReference>
<dbReference type="InterPro" id="IPR018449">
    <property type="entry name" value="NIL_domain"/>
</dbReference>
<dbReference type="InterPro" id="IPR027417">
    <property type="entry name" value="P-loop_NTPase"/>
</dbReference>
<dbReference type="PANTHER" id="PTHR43166">
    <property type="entry name" value="AMINO ACID IMPORT ATP-BINDING PROTEIN"/>
    <property type="match status" value="1"/>
</dbReference>
<dbReference type="PANTHER" id="PTHR43166:SF30">
    <property type="entry name" value="METHIONINE IMPORT ATP-BINDING PROTEIN METN"/>
    <property type="match status" value="1"/>
</dbReference>
<dbReference type="Pfam" id="PF00005">
    <property type="entry name" value="ABC_tran"/>
    <property type="match status" value="1"/>
</dbReference>
<dbReference type="Pfam" id="PF09383">
    <property type="entry name" value="NIL"/>
    <property type="match status" value="1"/>
</dbReference>
<dbReference type="SMART" id="SM00382">
    <property type="entry name" value="AAA"/>
    <property type="match status" value="1"/>
</dbReference>
<dbReference type="SMART" id="SM00930">
    <property type="entry name" value="NIL"/>
    <property type="match status" value="1"/>
</dbReference>
<dbReference type="SUPFAM" id="SSF55021">
    <property type="entry name" value="ACT-like"/>
    <property type="match status" value="1"/>
</dbReference>
<dbReference type="SUPFAM" id="SSF52540">
    <property type="entry name" value="P-loop containing nucleoside triphosphate hydrolases"/>
    <property type="match status" value="1"/>
</dbReference>
<dbReference type="PROSITE" id="PS00211">
    <property type="entry name" value="ABC_TRANSPORTER_1"/>
    <property type="match status" value="1"/>
</dbReference>
<dbReference type="PROSITE" id="PS50893">
    <property type="entry name" value="ABC_TRANSPORTER_2"/>
    <property type="match status" value="1"/>
</dbReference>
<dbReference type="PROSITE" id="PS51264">
    <property type="entry name" value="METN"/>
    <property type="match status" value="1"/>
</dbReference>
<keyword id="KW-0029">Amino-acid transport</keyword>
<keyword id="KW-0067">ATP-binding</keyword>
<keyword id="KW-0997">Cell inner membrane</keyword>
<keyword id="KW-1003">Cell membrane</keyword>
<keyword id="KW-0472">Membrane</keyword>
<keyword id="KW-0547">Nucleotide-binding</keyword>
<keyword id="KW-1278">Translocase</keyword>
<keyword id="KW-0813">Transport</keyword>
<accession>Q57S53</accession>